<dbReference type="EC" id="6.5.1.2" evidence="1"/>
<dbReference type="EMBL" id="FM200053">
    <property type="protein sequence ID" value="CAR61620.1"/>
    <property type="molecule type" value="Genomic_DNA"/>
</dbReference>
<dbReference type="RefSeq" id="WP_001241850.1">
    <property type="nucleotide sequence ID" value="NC_011147.1"/>
</dbReference>
<dbReference type="SMR" id="B5BI22"/>
<dbReference type="KEGG" id="sek:SSPA3354"/>
<dbReference type="HOGENOM" id="CLU_489786_0_0_6"/>
<dbReference type="Proteomes" id="UP000001869">
    <property type="component" value="Chromosome"/>
</dbReference>
<dbReference type="GO" id="GO:0003911">
    <property type="term" value="F:DNA ligase (NAD+) activity"/>
    <property type="evidence" value="ECO:0007669"/>
    <property type="project" value="UniProtKB-UniRule"/>
</dbReference>
<dbReference type="GO" id="GO:0006281">
    <property type="term" value="P:DNA repair"/>
    <property type="evidence" value="ECO:0007669"/>
    <property type="project" value="UniProtKB-KW"/>
</dbReference>
<dbReference type="GO" id="GO:0006260">
    <property type="term" value="P:DNA replication"/>
    <property type="evidence" value="ECO:0007669"/>
    <property type="project" value="UniProtKB-KW"/>
</dbReference>
<dbReference type="FunFam" id="1.10.287.610:FF:000003">
    <property type="entry name" value="DNA ligase B"/>
    <property type="match status" value="1"/>
</dbReference>
<dbReference type="FunFam" id="2.40.50.140:FF:000139">
    <property type="entry name" value="DNA ligase B"/>
    <property type="match status" value="1"/>
</dbReference>
<dbReference type="FunFam" id="3.30.470.30:FF:000007">
    <property type="entry name" value="DNA ligase B"/>
    <property type="match status" value="1"/>
</dbReference>
<dbReference type="Gene3D" id="3.30.470.30">
    <property type="entry name" value="DNA ligase/mRNA capping enzyme"/>
    <property type="match status" value="1"/>
</dbReference>
<dbReference type="Gene3D" id="1.10.287.610">
    <property type="entry name" value="Helix hairpin bin"/>
    <property type="match status" value="1"/>
</dbReference>
<dbReference type="Gene3D" id="2.40.50.140">
    <property type="entry name" value="Nucleic acid-binding proteins"/>
    <property type="match status" value="1"/>
</dbReference>
<dbReference type="HAMAP" id="MF_01587">
    <property type="entry name" value="DNA_ligase_B"/>
    <property type="match status" value="1"/>
</dbReference>
<dbReference type="InterPro" id="IPR018239">
    <property type="entry name" value="DNA_ligase_AS"/>
</dbReference>
<dbReference type="InterPro" id="IPR020923">
    <property type="entry name" value="DNA_ligase_B"/>
</dbReference>
<dbReference type="InterPro" id="IPR033136">
    <property type="entry name" value="DNA_ligase_CS"/>
</dbReference>
<dbReference type="InterPro" id="IPR013839">
    <property type="entry name" value="DNAligase_adenylation"/>
</dbReference>
<dbReference type="InterPro" id="IPR013840">
    <property type="entry name" value="DNAligase_N"/>
</dbReference>
<dbReference type="InterPro" id="IPR012340">
    <property type="entry name" value="NA-bd_OB-fold"/>
</dbReference>
<dbReference type="InterPro" id="IPR050326">
    <property type="entry name" value="NAD_dep_DNA_ligaseB"/>
</dbReference>
<dbReference type="InterPro" id="IPR004150">
    <property type="entry name" value="NAD_DNA_ligase_OB"/>
</dbReference>
<dbReference type="InterPro" id="IPR010994">
    <property type="entry name" value="RuvA_2-like"/>
</dbReference>
<dbReference type="NCBIfam" id="NF005987">
    <property type="entry name" value="PRK08097.1"/>
    <property type="match status" value="1"/>
</dbReference>
<dbReference type="PANTHER" id="PTHR47810">
    <property type="entry name" value="DNA LIGASE"/>
    <property type="match status" value="1"/>
</dbReference>
<dbReference type="PANTHER" id="PTHR47810:SF1">
    <property type="entry name" value="DNA LIGASE B"/>
    <property type="match status" value="1"/>
</dbReference>
<dbReference type="Pfam" id="PF01653">
    <property type="entry name" value="DNA_ligase_aden"/>
    <property type="match status" value="1"/>
</dbReference>
<dbReference type="Pfam" id="PF03120">
    <property type="entry name" value="DNA_ligase_OB"/>
    <property type="match status" value="1"/>
</dbReference>
<dbReference type="SMART" id="SM00532">
    <property type="entry name" value="LIGANc"/>
    <property type="match status" value="1"/>
</dbReference>
<dbReference type="SUPFAM" id="SSF56091">
    <property type="entry name" value="DNA ligase/mRNA capping enzyme, catalytic domain"/>
    <property type="match status" value="1"/>
</dbReference>
<dbReference type="SUPFAM" id="SSF50249">
    <property type="entry name" value="Nucleic acid-binding proteins"/>
    <property type="match status" value="1"/>
</dbReference>
<dbReference type="SUPFAM" id="SSF47781">
    <property type="entry name" value="RuvA domain 2-like"/>
    <property type="match status" value="1"/>
</dbReference>
<dbReference type="PROSITE" id="PS01055">
    <property type="entry name" value="DNA_LIGASE_N1"/>
    <property type="match status" value="1"/>
</dbReference>
<dbReference type="PROSITE" id="PS01056">
    <property type="entry name" value="DNA_LIGASE_N2"/>
    <property type="match status" value="1"/>
</dbReference>
<accession>B5BI22</accession>
<protein>
    <recommendedName>
        <fullName evidence="1">DNA ligase B</fullName>
        <ecNumber evidence="1">6.5.1.2</ecNumber>
    </recommendedName>
    <alternativeName>
        <fullName evidence="1">Polydeoxyribonucleotide synthase [NAD(+)] B</fullName>
    </alternativeName>
</protein>
<gene>
    <name evidence="1" type="primary">ligB</name>
    <name type="ordered locus">SSPA3354</name>
</gene>
<sequence length="561" mass="62709">MRLWKSMAWGILLWHSQSGALCPAWPPARAAEEITRLQQQLADWNDIYWKQGVSAVDDSVYDQLSARLVQWQRCVGQDVSSTPVSPPLNGTTMHPVAHTGVRKLADRQAVEQWVRGRSELWVQPKVDGVAVTLVYQNGKLTRAISRGNGLQGEDWTPKIRLIPSIPQTTQGALANAVLQGEIFLQREGHIQQRMGGMNARSKAAGMLMRQDNASALNSLGIFIWAWPDGPANMPERLSQLAKAGFSLTKKYSLAVKDASEVERARQSWLTSALPFVTDGVVIRMAKEPASQYWRPGQGDWLAAWKYPPVAQVAQVSAIQFSVGKSGKITVVASLVPVILDDKRVQRVNIGSVKRWEAWDIAPGDQILVSLAGQGIPRLDEVVWRSRERSKPVPPGSHFNSLTCFYASATCQEQFISRLVWLGSRSALGLDGMGEASWRALHQTHRFEHIFSWLALTSAQIANTPGVAKGKSEQIWRQFYLARRQSFTRWIMAMDIPLTQAALQASGDRSWEQLLMRTEQHWRQLPATGERRAGRVIDWRNNPQINALSRWLAAQHIPGFGS</sequence>
<keyword id="KW-0227">DNA damage</keyword>
<keyword id="KW-0234">DNA repair</keyword>
<keyword id="KW-0235">DNA replication</keyword>
<keyword id="KW-0436">Ligase</keyword>
<keyword id="KW-0520">NAD</keyword>
<proteinExistence type="inferred from homology"/>
<comment type="function">
    <text evidence="1">Catalyzes the formation of phosphodiester linkages between 5'-phosphoryl and 3'-hydroxyl groups in double-stranded DNA using NAD as a coenzyme and as the energy source for the reaction.</text>
</comment>
<comment type="catalytic activity">
    <reaction evidence="1">
        <text>NAD(+) + (deoxyribonucleotide)n-3'-hydroxyl + 5'-phospho-(deoxyribonucleotide)m = (deoxyribonucleotide)n+m + AMP + beta-nicotinamide D-nucleotide.</text>
        <dbReference type="EC" id="6.5.1.2"/>
    </reaction>
</comment>
<comment type="similarity">
    <text evidence="1">Belongs to the NAD-dependent DNA ligase family. LigB subfamily.</text>
</comment>
<evidence type="ECO:0000255" key="1">
    <source>
        <dbReference type="HAMAP-Rule" id="MF_01587"/>
    </source>
</evidence>
<reference key="1">
    <citation type="journal article" date="2009" name="BMC Genomics">
        <title>Pseudogene accumulation in the evolutionary histories of Salmonella enterica serovars Paratyphi A and Typhi.</title>
        <authorList>
            <person name="Holt K.E."/>
            <person name="Thomson N.R."/>
            <person name="Wain J."/>
            <person name="Langridge G.C."/>
            <person name="Hasan R."/>
            <person name="Bhutta Z.A."/>
            <person name="Quail M.A."/>
            <person name="Norbertczak H."/>
            <person name="Walker D."/>
            <person name="Simmonds M."/>
            <person name="White B."/>
            <person name="Bason N."/>
            <person name="Mungall K."/>
            <person name="Dougan G."/>
            <person name="Parkhill J."/>
        </authorList>
    </citation>
    <scope>NUCLEOTIDE SEQUENCE [LARGE SCALE GENOMIC DNA]</scope>
    <source>
        <strain>AKU_12601</strain>
    </source>
</reference>
<name>LIGB_SALPK</name>
<feature type="chain" id="PRO_1000147732" description="DNA ligase B">
    <location>
        <begin position="1"/>
        <end position="561"/>
    </location>
</feature>
<feature type="active site" description="N6-AMP-lysine intermediate" evidence="1">
    <location>
        <position position="125"/>
    </location>
</feature>
<organism>
    <name type="scientific">Salmonella paratyphi A (strain AKU_12601)</name>
    <dbReference type="NCBI Taxonomy" id="554290"/>
    <lineage>
        <taxon>Bacteria</taxon>
        <taxon>Pseudomonadati</taxon>
        <taxon>Pseudomonadota</taxon>
        <taxon>Gammaproteobacteria</taxon>
        <taxon>Enterobacterales</taxon>
        <taxon>Enterobacteriaceae</taxon>
        <taxon>Salmonella</taxon>
    </lineage>
</organism>